<name>HBB_URSMA</name>
<proteinExistence type="evidence at protein level"/>
<dbReference type="PIR" id="B25880">
    <property type="entry name" value="HBBRM"/>
</dbReference>
<dbReference type="SMR" id="P68011"/>
<dbReference type="STRING" id="29073.ENSUMAP00000000575"/>
<dbReference type="OMA" id="HAIVSIW"/>
<dbReference type="Proteomes" id="UP000261680">
    <property type="component" value="Unplaced"/>
</dbReference>
<dbReference type="GO" id="GO:0072562">
    <property type="term" value="C:blood microparticle"/>
    <property type="evidence" value="ECO:0007669"/>
    <property type="project" value="TreeGrafter"/>
</dbReference>
<dbReference type="GO" id="GO:0031838">
    <property type="term" value="C:haptoglobin-hemoglobin complex"/>
    <property type="evidence" value="ECO:0007669"/>
    <property type="project" value="TreeGrafter"/>
</dbReference>
<dbReference type="GO" id="GO:0005833">
    <property type="term" value="C:hemoglobin complex"/>
    <property type="evidence" value="ECO:0007669"/>
    <property type="project" value="InterPro"/>
</dbReference>
<dbReference type="GO" id="GO:0031720">
    <property type="term" value="F:haptoglobin binding"/>
    <property type="evidence" value="ECO:0007669"/>
    <property type="project" value="TreeGrafter"/>
</dbReference>
<dbReference type="GO" id="GO:0020037">
    <property type="term" value="F:heme binding"/>
    <property type="evidence" value="ECO:0007669"/>
    <property type="project" value="InterPro"/>
</dbReference>
<dbReference type="GO" id="GO:0031721">
    <property type="term" value="F:hemoglobin alpha binding"/>
    <property type="evidence" value="ECO:0007669"/>
    <property type="project" value="TreeGrafter"/>
</dbReference>
<dbReference type="GO" id="GO:0046872">
    <property type="term" value="F:metal ion binding"/>
    <property type="evidence" value="ECO:0007669"/>
    <property type="project" value="UniProtKB-KW"/>
</dbReference>
<dbReference type="GO" id="GO:0043177">
    <property type="term" value="F:organic acid binding"/>
    <property type="evidence" value="ECO:0007669"/>
    <property type="project" value="TreeGrafter"/>
</dbReference>
<dbReference type="GO" id="GO:0019825">
    <property type="term" value="F:oxygen binding"/>
    <property type="evidence" value="ECO:0007669"/>
    <property type="project" value="InterPro"/>
</dbReference>
<dbReference type="GO" id="GO:0005344">
    <property type="term" value="F:oxygen carrier activity"/>
    <property type="evidence" value="ECO:0007669"/>
    <property type="project" value="UniProtKB-KW"/>
</dbReference>
<dbReference type="GO" id="GO:0004601">
    <property type="term" value="F:peroxidase activity"/>
    <property type="evidence" value="ECO:0007669"/>
    <property type="project" value="TreeGrafter"/>
</dbReference>
<dbReference type="GO" id="GO:0042744">
    <property type="term" value="P:hydrogen peroxide catabolic process"/>
    <property type="evidence" value="ECO:0007669"/>
    <property type="project" value="TreeGrafter"/>
</dbReference>
<dbReference type="CDD" id="cd08925">
    <property type="entry name" value="Hb-beta-like"/>
    <property type="match status" value="1"/>
</dbReference>
<dbReference type="FunFam" id="1.10.490.10:FF:000001">
    <property type="entry name" value="Hemoglobin subunit beta"/>
    <property type="match status" value="1"/>
</dbReference>
<dbReference type="Gene3D" id="1.10.490.10">
    <property type="entry name" value="Globins"/>
    <property type="match status" value="1"/>
</dbReference>
<dbReference type="InterPro" id="IPR000971">
    <property type="entry name" value="Globin"/>
</dbReference>
<dbReference type="InterPro" id="IPR009050">
    <property type="entry name" value="Globin-like_sf"/>
</dbReference>
<dbReference type="InterPro" id="IPR012292">
    <property type="entry name" value="Globin/Proto"/>
</dbReference>
<dbReference type="InterPro" id="IPR002337">
    <property type="entry name" value="Hemoglobin_b"/>
</dbReference>
<dbReference type="InterPro" id="IPR050056">
    <property type="entry name" value="Hemoglobin_oxygen_transport"/>
</dbReference>
<dbReference type="PANTHER" id="PTHR11442">
    <property type="entry name" value="HEMOGLOBIN FAMILY MEMBER"/>
    <property type="match status" value="1"/>
</dbReference>
<dbReference type="PANTHER" id="PTHR11442:SF42">
    <property type="entry name" value="HEMOGLOBIN SUBUNIT BETA"/>
    <property type="match status" value="1"/>
</dbReference>
<dbReference type="Pfam" id="PF00042">
    <property type="entry name" value="Globin"/>
    <property type="match status" value="1"/>
</dbReference>
<dbReference type="PRINTS" id="PR00814">
    <property type="entry name" value="BETAHAEM"/>
</dbReference>
<dbReference type="SUPFAM" id="SSF46458">
    <property type="entry name" value="Globin-like"/>
    <property type="match status" value="1"/>
</dbReference>
<dbReference type="PROSITE" id="PS01033">
    <property type="entry name" value="GLOBIN"/>
    <property type="match status" value="1"/>
</dbReference>
<keyword id="KW-0007">Acetylation</keyword>
<keyword id="KW-0903">Direct protein sequencing</keyword>
<keyword id="KW-0349">Heme</keyword>
<keyword id="KW-0408">Iron</keyword>
<keyword id="KW-0479">Metal-binding</keyword>
<keyword id="KW-0561">Oxygen transport</keyword>
<keyword id="KW-0597">Phosphoprotein</keyword>
<keyword id="KW-1185">Reference proteome</keyword>
<keyword id="KW-0702">S-nitrosylation</keyword>
<keyword id="KW-0813">Transport</keyword>
<comment type="function">
    <text>Involved in oxygen transport from the lung to the various peripheral tissues.</text>
</comment>
<comment type="subunit">
    <text>Heterotetramer of two alpha chains and two beta chains.</text>
</comment>
<comment type="tissue specificity">
    <text>Red blood cells.</text>
</comment>
<comment type="similarity">
    <text evidence="3">Belongs to the globin family.</text>
</comment>
<reference key="1">
    <citation type="journal article" date="1986" name="Biol. Chem. Hoppe-Seyler">
        <title>Primary structure of hemoglobin of the polar bear (Ursus maritimus, Carnivora) and the Asiatic black bear (Ursus tibetanus, Carnivora).</title>
        <authorList>
            <person name="Hofmann O."/>
            <person name="Schreitmuller T."/>
            <person name="Braunitzer G."/>
            <person name="Wiesner M.V.H."/>
        </authorList>
    </citation>
    <scope>PROTEIN SEQUENCE</scope>
</reference>
<organism>
    <name type="scientific">Ursus maritimus</name>
    <name type="common">Polar bear</name>
    <name type="synonym">Thalarctos maritimus</name>
    <dbReference type="NCBI Taxonomy" id="29073"/>
    <lineage>
        <taxon>Eukaryota</taxon>
        <taxon>Metazoa</taxon>
        <taxon>Chordata</taxon>
        <taxon>Craniata</taxon>
        <taxon>Vertebrata</taxon>
        <taxon>Euteleostomi</taxon>
        <taxon>Mammalia</taxon>
        <taxon>Eutheria</taxon>
        <taxon>Laurasiatheria</taxon>
        <taxon>Carnivora</taxon>
        <taxon>Caniformia</taxon>
        <taxon>Ursidae</taxon>
        <taxon>Ursus</taxon>
    </lineage>
</organism>
<evidence type="ECO:0000250" key="1">
    <source>
        <dbReference type="UniProtKB" id="P02086"/>
    </source>
</evidence>
<evidence type="ECO:0000250" key="2">
    <source>
        <dbReference type="UniProtKB" id="P68871"/>
    </source>
</evidence>
<evidence type="ECO:0000255" key="3">
    <source>
        <dbReference type="PROSITE-ProRule" id="PRU00238"/>
    </source>
</evidence>
<feature type="chain" id="PRO_0000053147" description="Hemoglobin subunit beta">
    <location>
        <begin position="1"/>
        <end position="146"/>
    </location>
</feature>
<feature type="domain" description="Globin" evidence="3">
    <location>
        <begin position="2"/>
        <end position="146"/>
    </location>
</feature>
<feature type="binding site" description="distal binding residue">
    <location>
        <position position="63"/>
    </location>
    <ligand>
        <name>heme b</name>
        <dbReference type="ChEBI" id="CHEBI:60344"/>
    </ligand>
    <ligandPart>
        <name>Fe</name>
        <dbReference type="ChEBI" id="CHEBI:18248"/>
    </ligandPart>
</feature>
<feature type="binding site" description="proximal binding residue">
    <location>
        <position position="92"/>
    </location>
    <ligand>
        <name>heme b</name>
        <dbReference type="ChEBI" id="CHEBI:60344"/>
    </ligand>
    <ligandPart>
        <name>Fe</name>
        <dbReference type="ChEBI" id="CHEBI:18248"/>
    </ligandPart>
</feature>
<feature type="modified residue" description="N-acetylvaline" evidence="1">
    <location>
        <position position="1"/>
    </location>
</feature>
<feature type="modified residue" description="Phosphothreonine" evidence="2">
    <location>
        <position position="12"/>
    </location>
</feature>
<feature type="modified residue" description="Phosphoserine" evidence="2">
    <location>
        <position position="44"/>
    </location>
</feature>
<feature type="modified residue" description="N6-acetyllysine" evidence="2">
    <location>
        <position position="59"/>
    </location>
</feature>
<feature type="modified residue" description="N6-acetyllysine" evidence="2">
    <location>
        <position position="82"/>
    </location>
</feature>
<feature type="modified residue" description="S-nitrosocysteine" evidence="2">
    <location>
        <position position="93"/>
    </location>
</feature>
<feature type="modified residue" description="N6-acetyllysine" evidence="2">
    <location>
        <position position="144"/>
    </location>
</feature>
<protein>
    <recommendedName>
        <fullName>Hemoglobin subunit beta</fullName>
    </recommendedName>
    <alternativeName>
        <fullName>Beta-globin</fullName>
    </alternativeName>
    <alternativeName>
        <fullName>Hemoglobin beta chain</fullName>
    </alternativeName>
</protein>
<gene>
    <name type="primary">HBB</name>
</gene>
<sequence>VHLTGEEKSLVTGLWGKVNVDEVGGEALGRLLVVYPWTQRFFDSFGDLSSADAIMNNPKVKAHGKKVLNSFSDGLKNLDNLKGTFAKLSELHCDKLHVDPENFKLLGNVLVCVLAHHFGKEFTPQVQAAYQKVVAGVANALAHKYH</sequence>
<accession>P68011</accession>
<accession>P07422</accession>